<feature type="chain" id="PRO_0000259424" description="Eukaryotic translation initiation factor 3 subunit C">
    <location>
        <begin position="1"/>
        <end position="913"/>
    </location>
</feature>
<feature type="domain" description="PCI" evidence="4">
    <location>
        <begin position="673"/>
        <end position="849"/>
    </location>
</feature>
<feature type="region of interest" description="Disordered" evidence="5">
    <location>
        <begin position="1"/>
        <end position="44"/>
    </location>
</feature>
<feature type="region of interest" description="Disordered" evidence="5">
    <location>
        <begin position="157"/>
        <end position="301"/>
    </location>
</feature>
<feature type="region of interest" description="Disordered" evidence="5">
    <location>
        <begin position="522"/>
        <end position="542"/>
    </location>
</feature>
<feature type="region of interest" description="Disordered" evidence="5">
    <location>
        <begin position="885"/>
        <end position="913"/>
    </location>
</feature>
<feature type="compositionally biased region" description="Low complexity" evidence="5">
    <location>
        <begin position="8"/>
        <end position="21"/>
    </location>
</feature>
<feature type="compositionally biased region" description="Acidic residues" evidence="5">
    <location>
        <begin position="166"/>
        <end position="190"/>
    </location>
</feature>
<feature type="compositionally biased region" description="Basic and acidic residues" evidence="5">
    <location>
        <begin position="199"/>
        <end position="216"/>
    </location>
</feature>
<feature type="compositionally biased region" description="Acidic residues" evidence="5">
    <location>
        <begin position="217"/>
        <end position="232"/>
    </location>
</feature>
<feature type="compositionally biased region" description="Basic and acidic residues" evidence="5">
    <location>
        <begin position="261"/>
        <end position="278"/>
    </location>
</feature>
<feature type="compositionally biased region" description="Polar residues" evidence="5">
    <location>
        <begin position="522"/>
        <end position="531"/>
    </location>
</feature>
<feature type="compositionally biased region" description="Basic and acidic residues" evidence="5">
    <location>
        <begin position="886"/>
        <end position="899"/>
    </location>
</feature>
<feature type="modified residue" description="Phosphoserine" evidence="2 3">
    <location>
        <position position="9"/>
    </location>
</feature>
<feature type="modified residue" description="Phosphoserine" evidence="2 3">
    <location>
        <position position="11"/>
    </location>
</feature>
<feature type="modified residue" description="Phosphoserine" evidence="2 3">
    <location>
        <position position="13"/>
    </location>
</feature>
<feature type="modified residue" description="Phosphoserine" evidence="2 3">
    <location>
        <position position="15"/>
    </location>
</feature>
<feature type="modified residue" description="Phosphoserine" evidence="2 3">
    <location>
        <position position="16"/>
    </location>
</feature>
<feature type="modified residue" description="Phosphoserine" evidence="2 3">
    <location>
        <position position="18"/>
    </location>
</feature>
<feature type="modified residue" description="Phosphoserine" evidence="2 3">
    <location>
        <position position="39"/>
    </location>
</feature>
<feature type="modified residue" description="N6-acetyllysine" evidence="1">
    <location>
        <position position="99"/>
    </location>
</feature>
<feature type="modified residue" description="Phosphoserine" evidence="2 3">
    <location>
        <position position="166"/>
    </location>
</feature>
<feature type="modified residue" description="Phosphoserine" evidence="1">
    <location>
        <position position="178"/>
    </location>
</feature>
<feature type="modified residue" description="Phosphoserine" evidence="1">
    <location>
        <position position="181"/>
    </location>
</feature>
<feature type="modified residue" description="Phosphoserine" evidence="1">
    <location>
        <position position="182"/>
    </location>
</feature>
<feature type="modified residue" description="Phosphothreonine" evidence="2 3">
    <location>
        <position position="524"/>
    </location>
</feature>
<feature type="modified residue" description="N6-acetyllysine" evidence="1">
    <location>
        <position position="643"/>
    </location>
</feature>
<feature type="modified residue" description="Phosphoserine" evidence="2 3">
    <location>
        <position position="909"/>
    </location>
</feature>
<name>EIF3C_PONAB</name>
<gene>
    <name evidence="3" type="primary">EIF3C</name>
    <name evidence="3" type="synonym">EIF3S8</name>
</gene>
<comment type="function">
    <text evidence="3">Component of the eukaryotic translation initiation factor 3 (eIF-3) complex, which is required for several steps in the initiation of protein synthesis. The eIF-3 complex associates with the 40S ribosome and facilitates the recruitment of eIF-1, eIF-1A, eIF-2:GTP:methionyl-tRNAi and eIF-5 to form the 43S pre-initiation complex (43S PIC). The eIF-3 complex stimulates mRNA recruitment to the 43S PIC and scanning of the mRNA for AUG recognition. The eIF-3 complex is also required for disassembly and recycling of post-termination ribosomal complexes and subsequently prevents premature joining of the 40S and 60S ribosomal subunits prior to initiation. The eIF-3 complex specifically targets and initiates translation of a subset of mRNAs involved in cell proliferation, including cell cycling, differentiation and apoptosis, and uses different modes of RNA stem-loop binding to exert either translational activation or repression.</text>
</comment>
<comment type="subunit">
    <text evidence="2 3">Component of the eukaryotic translation initiation factor 3 (eIF-3) complex, which is composed of 13 subunits: EIF3A, EIF3B, EIF3C, EIF3D, EIF3E, EIF3F, EIF3G, EIF3H, EIF3I, EIF3J, EIF3K, EIF3L and EIF3M. The eIF-3 complex appears to include 3 stable modules: module A is composed of EIF3A, EIF3B, EIF3G and EIF3I; module B is composed of EIF3F, EIF3H, and EIF3M; and module C is composed of EIF3C, EIF3D, EIF3E, EIF3K and EIF3L. EIF3C of module C binds EIF3B of module A and EIF3H of module B, thereby linking the three modules. EIF3J is a labile subunit that binds to the eIF-3 complex via EIF3B. The eIF-3 complex interacts with RPS6KB1 under conditions of nutrient depletion. Mitogenic stimulation leads to binding and activation of a complex composed of MTOR and RPTOR, leading to phosphorylation and release of RPS6KB1 and binding of EIF4B to eIF-3 (By similarity). Interacts with ALKBH4, IFIT1 and IFIT2 (By similarity). Interacts with BZW2/5MP1 (By similarity).</text>
</comment>
<comment type="subcellular location">
    <subcellularLocation>
        <location evidence="3">Cytoplasm</location>
    </subcellularLocation>
</comment>
<comment type="PTM">
    <text evidence="3">Phosphorylated. Phosphorylation is enhanced upon serum stimulation.</text>
</comment>
<comment type="similarity">
    <text evidence="3">Belongs to the eIF-3 subunit C family.</text>
</comment>
<protein>
    <recommendedName>
        <fullName evidence="3">Eukaryotic translation initiation factor 3 subunit C</fullName>
        <shortName evidence="3">eIF3c</shortName>
    </recommendedName>
    <alternativeName>
        <fullName evidence="3">Eukaryotic translation initiation factor 3 subunit 8</fullName>
    </alternativeName>
    <alternativeName>
        <fullName evidence="3">eIF3 p110</fullName>
    </alternativeName>
</protein>
<sequence>MSRFFTTGSDSESESSLSGEELVTKPVGGNYGKQPLLLSEDEEDTKRVVRSAKDKRFEELTNLIRTIRNAMKIRDVTKCLEEFELLGKAYGKAKSIVDKEGVPRFYIRILADLEDYLNELWEDKEGKKKMNKNNAKALSTLRQKIRKYNRDFESHITSYKQNPEQSADEDAEKNEEDSEGSSDEDEDEDGVSAATFLKKKSEAPSGESRKFLKKMDDEDEDSEDSEDDEDWDTGSTSSDSDSEEEEGKQTALASRFLKKAPTTDEDKKAAEKKREDKAKKKHDRKSKRLDEEEEDNEGGEWERVRGGVPLVKEKPKMFAKGTEITHAVVIKKLNEILQARGKKGTDRAAQIELLQLLVQIAAENNLGEGVIVKIKFNIIASLYDYNPNLATYMKPEMWGKCLDCINELMDILFANPNIFVGENILEESENLHNADQPLRVRGCILTLVERMDEEFTKIMQNTDPHSQEYVEHLKDEAQVCAIIERVQRYLEEKGTTEEVCRIYLLRILHTYYKFDYKAHQRQLTPPEGSSKSEQDQAENEGEDSAVLMERLCKYIYAKDRTDRIRTCAILCHIYHHALHSRWYQARDLMLMSHLQDNIQHADPPVQILYNRTMVQLGICAFRQGLTMDAHNALLDIQSSGRAKELLGQGLLLRSLQERNQEQEKVERRRQVPFHLHINLELLECVYLVSAMLLEIPYMAAHESDARRRMISKQFHHQLRVGERQPLLGPPESMREHVVAASKAMKMGDWKTCHSFIINEKMNGKVWDLFPEADKVRTMLVRKIQEESLRTYLFTYSSVYDSISMETLSDMFELDLPTVHSIISKMIINEELMASLDQPTQTVVMHRTEPTAQQNLALQLAEKLGSLVENNERVFDHKQGTYGGYFRDQKDGYRKNEGYMRRGGYRQQQSQTAY</sequence>
<dbReference type="EMBL" id="CR858924">
    <property type="protein sequence ID" value="CAH91122.1"/>
    <property type="molecule type" value="mRNA"/>
</dbReference>
<dbReference type="RefSeq" id="NP_001125656.1">
    <property type="nucleotide sequence ID" value="NM_001132184.1"/>
</dbReference>
<dbReference type="SMR" id="Q5RAT8"/>
<dbReference type="FunCoup" id="Q5RAT8">
    <property type="interactions" value="653"/>
</dbReference>
<dbReference type="STRING" id="9601.ENSPPYP00000008171"/>
<dbReference type="GeneID" id="100172576"/>
<dbReference type="KEGG" id="pon:100172576"/>
<dbReference type="CTD" id="8663"/>
<dbReference type="eggNOG" id="KOG1076">
    <property type="taxonomic scope" value="Eukaryota"/>
</dbReference>
<dbReference type="InParanoid" id="Q5RAT8"/>
<dbReference type="OrthoDB" id="29647at2759"/>
<dbReference type="Proteomes" id="UP000001595">
    <property type="component" value="Unplaced"/>
</dbReference>
<dbReference type="GO" id="GO:0016282">
    <property type="term" value="C:eukaryotic 43S preinitiation complex"/>
    <property type="evidence" value="ECO:0007669"/>
    <property type="project" value="UniProtKB-UniRule"/>
</dbReference>
<dbReference type="GO" id="GO:0033290">
    <property type="term" value="C:eukaryotic 48S preinitiation complex"/>
    <property type="evidence" value="ECO:0007669"/>
    <property type="project" value="UniProtKB-UniRule"/>
</dbReference>
<dbReference type="GO" id="GO:0005852">
    <property type="term" value="C:eukaryotic translation initiation factor 3 complex"/>
    <property type="evidence" value="ECO:0000250"/>
    <property type="project" value="UniProtKB"/>
</dbReference>
<dbReference type="GO" id="GO:0003723">
    <property type="term" value="F:RNA binding"/>
    <property type="evidence" value="ECO:0007669"/>
    <property type="project" value="InterPro"/>
</dbReference>
<dbReference type="GO" id="GO:0003743">
    <property type="term" value="F:translation initiation factor activity"/>
    <property type="evidence" value="ECO:0007669"/>
    <property type="project" value="UniProtKB-UniRule"/>
</dbReference>
<dbReference type="GO" id="GO:0031369">
    <property type="term" value="F:translation initiation factor binding"/>
    <property type="evidence" value="ECO:0007669"/>
    <property type="project" value="InterPro"/>
</dbReference>
<dbReference type="GO" id="GO:0001732">
    <property type="term" value="P:formation of cytoplasmic translation initiation complex"/>
    <property type="evidence" value="ECO:0007669"/>
    <property type="project" value="UniProtKB-UniRule"/>
</dbReference>
<dbReference type="GO" id="GO:0006413">
    <property type="term" value="P:translational initiation"/>
    <property type="evidence" value="ECO:0000250"/>
    <property type="project" value="UniProtKB"/>
</dbReference>
<dbReference type="FunFam" id="1.10.10.10:FF:000461">
    <property type="entry name" value="Eukaryotic translation initiation factor 3 subunit C"/>
    <property type="match status" value="1"/>
</dbReference>
<dbReference type="Gene3D" id="1.10.10.10">
    <property type="entry name" value="Winged helix-like DNA-binding domain superfamily/Winged helix DNA-binding domain"/>
    <property type="match status" value="1"/>
</dbReference>
<dbReference type="HAMAP" id="MF_03002">
    <property type="entry name" value="eIF3c"/>
    <property type="match status" value="1"/>
</dbReference>
<dbReference type="InterPro" id="IPR027516">
    <property type="entry name" value="EIF3C"/>
</dbReference>
<dbReference type="InterPro" id="IPR008905">
    <property type="entry name" value="EIF3C_N_dom"/>
</dbReference>
<dbReference type="InterPro" id="IPR000717">
    <property type="entry name" value="PCI_dom"/>
</dbReference>
<dbReference type="InterPro" id="IPR036388">
    <property type="entry name" value="WH-like_DNA-bd_sf"/>
</dbReference>
<dbReference type="InterPro" id="IPR036390">
    <property type="entry name" value="WH_DNA-bd_sf"/>
</dbReference>
<dbReference type="PANTHER" id="PTHR13937">
    <property type="entry name" value="EUKARYOTIC TRANSLATION INITATION FACTOR 3, SUBUNIT 8 EIF3S8 -RELATED"/>
    <property type="match status" value="1"/>
</dbReference>
<dbReference type="PANTHER" id="PTHR13937:SF0">
    <property type="entry name" value="EUKARYOTIC TRANSLATION INITIATION FACTOR 3 SUBUNIT C-RELATED"/>
    <property type="match status" value="1"/>
</dbReference>
<dbReference type="Pfam" id="PF05470">
    <property type="entry name" value="eIF-3c_N"/>
    <property type="match status" value="1"/>
</dbReference>
<dbReference type="Pfam" id="PF01399">
    <property type="entry name" value="PCI"/>
    <property type="match status" value="1"/>
</dbReference>
<dbReference type="SMART" id="SM00088">
    <property type="entry name" value="PINT"/>
    <property type="match status" value="1"/>
</dbReference>
<dbReference type="SUPFAM" id="SSF46785">
    <property type="entry name" value="Winged helix' DNA-binding domain"/>
    <property type="match status" value="1"/>
</dbReference>
<dbReference type="PROSITE" id="PS50250">
    <property type="entry name" value="PCI"/>
    <property type="match status" value="1"/>
</dbReference>
<evidence type="ECO:0000250" key="1">
    <source>
        <dbReference type="UniProtKB" id="Q8R1B4"/>
    </source>
</evidence>
<evidence type="ECO:0000250" key="2">
    <source>
        <dbReference type="UniProtKB" id="Q99613"/>
    </source>
</evidence>
<evidence type="ECO:0000255" key="3">
    <source>
        <dbReference type="HAMAP-Rule" id="MF_03002"/>
    </source>
</evidence>
<evidence type="ECO:0000255" key="4">
    <source>
        <dbReference type="PROSITE-ProRule" id="PRU01185"/>
    </source>
</evidence>
<evidence type="ECO:0000256" key="5">
    <source>
        <dbReference type="SAM" id="MobiDB-lite"/>
    </source>
</evidence>
<proteinExistence type="evidence at transcript level"/>
<reference key="1">
    <citation type="submission" date="2004-11" db="EMBL/GenBank/DDBJ databases">
        <authorList>
            <consortium name="The German cDNA consortium"/>
        </authorList>
    </citation>
    <scope>NUCLEOTIDE SEQUENCE [LARGE SCALE MRNA]</scope>
    <source>
        <tissue>Kidney</tissue>
    </source>
</reference>
<organism>
    <name type="scientific">Pongo abelii</name>
    <name type="common">Sumatran orangutan</name>
    <name type="synonym">Pongo pygmaeus abelii</name>
    <dbReference type="NCBI Taxonomy" id="9601"/>
    <lineage>
        <taxon>Eukaryota</taxon>
        <taxon>Metazoa</taxon>
        <taxon>Chordata</taxon>
        <taxon>Craniata</taxon>
        <taxon>Vertebrata</taxon>
        <taxon>Euteleostomi</taxon>
        <taxon>Mammalia</taxon>
        <taxon>Eutheria</taxon>
        <taxon>Euarchontoglires</taxon>
        <taxon>Primates</taxon>
        <taxon>Haplorrhini</taxon>
        <taxon>Catarrhini</taxon>
        <taxon>Hominidae</taxon>
        <taxon>Pongo</taxon>
    </lineage>
</organism>
<accession>Q5RAT8</accession>
<keyword id="KW-0007">Acetylation</keyword>
<keyword id="KW-0963">Cytoplasm</keyword>
<keyword id="KW-0396">Initiation factor</keyword>
<keyword id="KW-0597">Phosphoprotein</keyword>
<keyword id="KW-0648">Protein biosynthesis</keyword>
<keyword id="KW-1185">Reference proteome</keyword>